<evidence type="ECO:0000250" key="1">
    <source>
        <dbReference type="UniProtKB" id="P36394"/>
    </source>
</evidence>
<evidence type="ECO:0000250" key="2">
    <source>
        <dbReference type="UniProtKB" id="Q05066"/>
    </source>
</evidence>
<evidence type="ECO:0000255" key="3">
    <source>
        <dbReference type="PROSITE-ProRule" id="PRU00267"/>
    </source>
</evidence>
<evidence type="ECO:0000256" key="4">
    <source>
        <dbReference type="SAM" id="MobiDB-lite"/>
    </source>
</evidence>
<evidence type="ECO:0000305" key="5"/>
<keyword id="KW-0010">Activator</keyword>
<keyword id="KW-0112">Calmodulin-binding</keyword>
<keyword id="KW-0963">Cytoplasm</keyword>
<keyword id="KW-0221">Differentiation</keyword>
<keyword id="KW-0238">DNA-binding</keyword>
<keyword id="KW-0539">Nucleus</keyword>
<keyword id="KW-0678">Repressor</keyword>
<keyword id="KW-0726">Sexual differentiation</keyword>
<keyword id="KW-0804">Transcription</keyword>
<keyword id="KW-0805">Transcription regulation</keyword>
<dbReference type="EMBL" id="AB108513">
    <property type="protein sequence ID" value="BAC75645.1"/>
    <property type="molecule type" value="Genomic_DNA"/>
</dbReference>
<dbReference type="SMR" id="Q864Q8"/>
<dbReference type="GO" id="GO:0005737">
    <property type="term" value="C:cytoplasm"/>
    <property type="evidence" value="ECO:0007669"/>
    <property type="project" value="UniProtKB-SubCell"/>
</dbReference>
<dbReference type="GO" id="GO:0016607">
    <property type="term" value="C:nuclear speck"/>
    <property type="evidence" value="ECO:0007669"/>
    <property type="project" value="UniProtKB-SubCell"/>
</dbReference>
<dbReference type="GO" id="GO:0005634">
    <property type="term" value="C:nucleus"/>
    <property type="evidence" value="ECO:0000250"/>
    <property type="project" value="UniProtKB"/>
</dbReference>
<dbReference type="GO" id="GO:0005516">
    <property type="term" value="F:calmodulin binding"/>
    <property type="evidence" value="ECO:0007669"/>
    <property type="project" value="UniProtKB-KW"/>
</dbReference>
<dbReference type="GO" id="GO:0001228">
    <property type="term" value="F:DNA-binding transcription activator activity, RNA polymerase II-specific"/>
    <property type="evidence" value="ECO:0007669"/>
    <property type="project" value="TreeGrafter"/>
</dbReference>
<dbReference type="GO" id="GO:0000978">
    <property type="term" value="F:RNA polymerase II cis-regulatory region sequence-specific DNA binding"/>
    <property type="evidence" value="ECO:0007669"/>
    <property type="project" value="TreeGrafter"/>
</dbReference>
<dbReference type="GO" id="GO:0030154">
    <property type="term" value="P:cell differentiation"/>
    <property type="evidence" value="ECO:0007669"/>
    <property type="project" value="UniProtKB-KW"/>
</dbReference>
<dbReference type="GO" id="GO:0030238">
    <property type="term" value="P:male sex determination"/>
    <property type="evidence" value="ECO:0007669"/>
    <property type="project" value="InterPro"/>
</dbReference>
<dbReference type="GO" id="GO:0007548">
    <property type="term" value="P:sex differentiation"/>
    <property type="evidence" value="ECO:0007669"/>
    <property type="project" value="UniProtKB-KW"/>
</dbReference>
<dbReference type="CDD" id="cd22034">
    <property type="entry name" value="HMG-box_SoxA_SRY"/>
    <property type="match status" value="1"/>
</dbReference>
<dbReference type="FunFam" id="1.10.30.10:FF:000002">
    <property type="entry name" value="transcription factor Sox-2"/>
    <property type="match status" value="1"/>
</dbReference>
<dbReference type="Gene3D" id="1.10.30.10">
    <property type="entry name" value="High mobility group box domain"/>
    <property type="match status" value="1"/>
</dbReference>
<dbReference type="InterPro" id="IPR009071">
    <property type="entry name" value="HMG_box_dom"/>
</dbReference>
<dbReference type="InterPro" id="IPR036910">
    <property type="entry name" value="HMG_box_dom_sf"/>
</dbReference>
<dbReference type="InterPro" id="IPR017253">
    <property type="entry name" value="SRY"/>
</dbReference>
<dbReference type="InterPro" id="IPR050140">
    <property type="entry name" value="SRY-related_HMG-box_TF-like"/>
</dbReference>
<dbReference type="PANTHER" id="PTHR10270:SF161">
    <property type="entry name" value="SEX-DETERMINING REGION Y PROTEIN"/>
    <property type="match status" value="1"/>
</dbReference>
<dbReference type="PANTHER" id="PTHR10270">
    <property type="entry name" value="SOX TRANSCRIPTION FACTOR"/>
    <property type="match status" value="1"/>
</dbReference>
<dbReference type="Pfam" id="PF00505">
    <property type="entry name" value="HMG_box"/>
    <property type="match status" value="1"/>
</dbReference>
<dbReference type="PIRSF" id="PIRSF037653">
    <property type="entry name" value="SRY"/>
    <property type="match status" value="1"/>
</dbReference>
<dbReference type="SMART" id="SM00398">
    <property type="entry name" value="HMG"/>
    <property type="match status" value="1"/>
</dbReference>
<dbReference type="SUPFAM" id="SSF47095">
    <property type="entry name" value="HMG-box"/>
    <property type="match status" value="1"/>
</dbReference>
<dbReference type="PROSITE" id="PS50118">
    <property type="entry name" value="HMG_BOX_2"/>
    <property type="match status" value="1"/>
</dbReference>
<proteinExistence type="inferred from homology"/>
<protein>
    <recommendedName>
        <fullName>Sex-determining region Y protein</fullName>
    </recommendedName>
    <alternativeName>
        <fullName>Testis-determining factor</fullName>
    </alternativeName>
</protein>
<gene>
    <name type="primary">SRY</name>
    <name type="synonym">TDF</name>
</gene>
<accession>Q864Q8</accession>
<feature type="chain" id="PRO_0000048679" description="Sex-determining region Y protein">
    <location>
        <begin position="1"/>
        <end position="204"/>
    </location>
</feature>
<feature type="DNA-binding region" description="HMG box" evidence="3">
    <location>
        <begin position="54"/>
        <end position="122"/>
    </location>
</feature>
<feature type="region of interest" description="Disordered" evidence="4">
    <location>
        <begin position="32"/>
        <end position="52"/>
    </location>
</feature>
<feature type="region of interest" description="Disordered" evidence="4">
    <location>
        <begin position="169"/>
        <end position="204"/>
    </location>
</feature>
<feature type="compositionally biased region" description="Polar residues" evidence="4">
    <location>
        <begin position="175"/>
        <end position="187"/>
    </location>
</feature>
<feature type="compositionally biased region" description="Polar residues" evidence="4">
    <location>
        <begin position="194"/>
        <end position="204"/>
    </location>
</feature>
<name>SRY_MEGNO</name>
<reference key="1">
    <citation type="journal article" date="2003" name="Mammal Study">
        <title>SRY gene structure and phylogeny in the cetacean species.</title>
        <authorList>
            <person name="Nishida S."/>
            <person name="Pastene L.A."/>
            <person name="Goto M."/>
            <person name="Koike H."/>
        </authorList>
    </citation>
    <scope>NUCLEOTIDE SEQUENCE [GENOMIC DNA]</scope>
</reference>
<organism>
    <name type="scientific">Megaptera novaeangliae</name>
    <name type="common">Humpback whale</name>
    <name type="synonym">Balaena novaeangliae</name>
    <dbReference type="NCBI Taxonomy" id="9773"/>
    <lineage>
        <taxon>Eukaryota</taxon>
        <taxon>Metazoa</taxon>
        <taxon>Chordata</taxon>
        <taxon>Craniata</taxon>
        <taxon>Vertebrata</taxon>
        <taxon>Euteleostomi</taxon>
        <taxon>Mammalia</taxon>
        <taxon>Eutheria</taxon>
        <taxon>Laurasiatheria</taxon>
        <taxon>Artiodactyla</taxon>
        <taxon>Whippomorpha</taxon>
        <taxon>Cetacea</taxon>
        <taxon>Mysticeti</taxon>
        <taxon>Balaenopteridae</taxon>
        <taxon>Megaptera</taxon>
    </lineage>
</organism>
<sequence length="204" mass="23702">MFRIVNGEDYSPAVQQRNSLDFGKAPSLLWTDHGGSNDRCETGGNGRESGQDRVKRPMNAFIVWSRDQRRKVALENPQMQNSEISKRLGYDWKMLTEAEKQPFFEEAQRLRAMHRDKYPGYKYRPRRKAKRSQKLLPADSSVLCSRMHIEETLYPFTYKDGCAKATRSRMESRLSRSQPTNTASSLLPQEHRSSWTSLSHNRVT</sequence>
<comment type="function">
    <text evidence="1 2">Transcriptional regulator that controls a genetic switch in male development. It is necessary and sufficient for initiating male sex determination by directing the development of supporting cell precursors (pre-Sertoli cells) as Sertoli rather than granulosa cells. Involved in different aspects of gene regulation including promoter activation or repression. Binds to the DNA consensus sequence 5'-[AT]AACAA[AT]-3'. SRY HMG box recognizes DNA by partial intercalation in the minor groove and promotes DNA bending. Also involved in pre-mRNA splicing (By similarity). In male adult brain involved in the maintenance of motor functions of dopaminergic neurons (By similarity).</text>
</comment>
<comment type="subunit">
    <text evidence="2">Interacts with CALM, EP300, HDAC3, KPNB1, ZNF208 isoform KRAB-O, PARP1, SLC9A3R2 and WT1. The interaction with EP300 modulates its DNA-binding activity. The interaction with KPNB1 is sensitive to dissociation by Ran in the GTP-bound form. Interaction with PARP1 impaired its DNA-binding activity.</text>
</comment>
<comment type="subcellular location">
    <subcellularLocation>
        <location evidence="2">Nucleus speckle</location>
    </subcellularLocation>
    <subcellularLocation>
        <location evidence="2">Cytoplasm</location>
    </subcellularLocation>
    <subcellularLocation>
        <location evidence="2">Nucleus</location>
    </subcellularLocation>
</comment>
<comment type="similarity">
    <text evidence="5">Belongs to the SRY family.</text>
</comment>
<comment type="online information" name="Protein Spotlight">
    <link uri="https://www.proteinspotlight.org/back_issues/080"/>
    <text>The tenuous nature of sex - Issue 80 of March 2007</text>
</comment>